<sequence length="219" mass="25469">MLFDSRTPQSSEGFKPNVDNSIKKPIPTGVEKFFFILFFILTIGIFYFVYVGRKNELMRDQNEIQNASSLIQAAEKRRRAVLIKMMDSLIGYKNFENETLSKITQYRSKLSNIDVDKTSPVELKSQIDSIRGALNFQFEQYPDLKASKLYLQFSTEISMQEDEIYATIRNYNMIATSFNSKIYTFWTNCVAQKLDLYNVAIFQASEIERVDVDTSELRN</sequence>
<feature type="chain" id="PRO_0000066248" description="Protein LemA">
    <location>
        <begin position="1"/>
        <end position="219"/>
    </location>
</feature>
<feature type="transmembrane region" description="Helical" evidence="1">
    <location>
        <begin position="32"/>
        <end position="52"/>
    </location>
</feature>
<feature type="coiled-coil region" evidence="1">
    <location>
        <begin position="54"/>
        <end position="82"/>
    </location>
</feature>
<evidence type="ECO:0000255" key="1"/>
<evidence type="ECO:0000305" key="2"/>
<gene>
    <name type="primary">lemA</name>
    <name type="ordered locus">MHO_3750</name>
</gene>
<accession>P43054</accession>
<accession>D1J8G3</accession>
<protein>
    <recommendedName>
        <fullName>Protein LemA</fullName>
    </recommendedName>
    <alternativeName>
        <fullName>ORF219</fullName>
    </alternativeName>
</protein>
<name>LEMA_METH1</name>
<proteinExistence type="inferred from homology"/>
<reference key="1">
    <citation type="journal article" date="1994" name="J. Bacteriol.">
        <title>Sequencing analysis reveals a unique gene organization in the gyrB region of Mycoplasma hominis.</title>
        <authorList>
            <person name="Ladefoged S.A."/>
            <person name="Christiansen G."/>
        </authorList>
    </citation>
    <scope>NUCLEOTIDE SEQUENCE [GENOMIC DNA]</scope>
</reference>
<reference key="2">
    <citation type="journal article" date="2009" name="PLoS Genet.">
        <title>Life on arginine for Mycoplasma hominis: clues from its minimal genome and comparison with other human urogenital mycoplasmas.</title>
        <authorList>
            <person name="Pereyre S."/>
            <person name="Sirand-Pugnet P."/>
            <person name="Beven L."/>
            <person name="Charron A."/>
            <person name="Renaudin H."/>
            <person name="Barre A."/>
            <person name="Avenaud P."/>
            <person name="Jacob D."/>
            <person name="Couloux A."/>
            <person name="Barbe V."/>
            <person name="de Daruvar A."/>
            <person name="Blanchard A."/>
            <person name="Bebear C."/>
        </authorList>
    </citation>
    <scope>NUCLEOTIDE SEQUENCE [LARGE SCALE GENOMIC DNA]</scope>
    <source>
        <strain>ATCC 23114 / DSM 25592 / NBRC 14850 / NCTC 10111 / PG21</strain>
    </source>
</reference>
<comment type="subcellular location">
    <subcellularLocation>
        <location evidence="2">Cell membrane</location>
        <topology evidence="2">Single-pass membrane protein</topology>
    </subcellularLocation>
</comment>
<comment type="similarity">
    <text evidence="2">Belongs to the LemA family.</text>
</comment>
<keyword id="KW-1003">Cell membrane</keyword>
<keyword id="KW-0175">Coiled coil</keyword>
<keyword id="KW-0472">Membrane</keyword>
<keyword id="KW-1185">Reference proteome</keyword>
<keyword id="KW-0812">Transmembrane</keyword>
<keyword id="KW-1133">Transmembrane helix</keyword>
<dbReference type="EMBL" id="X77529">
    <property type="protein sequence ID" value="CAA54664.1"/>
    <property type="molecule type" value="Genomic_DNA"/>
</dbReference>
<dbReference type="EMBL" id="FP236530">
    <property type="protein sequence ID" value="CAX37510.1"/>
    <property type="molecule type" value="Genomic_DNA"/>
</dbReference>
<dbReference type="RefSeq" id="WP_012855649.1">
    <property type="nucleotide sequence ID" value="NC_013511.1"/>
</dbReference>
<dbReference type="SMR" id="P43054"/>
<dbReference type="STRING" id="347256.MHO_3750"/>
<dbReference type="PaxDb" id="347256-MHO_3750"/>
<dbReference type="KEGG" id="mho:MHO_3750"/>
<dbReference type="eggNOG" id="COG1704">
    <property type="taxonomic scope" value="Bacteria"/>
</dbReference>
<dbReference type="HOGENOM" id="CLU_056714_3_0_14"/>
<dbReference type="Proteomes" id="UP000002631">
    <property type="component" value="Chromosome"/>
</dbReference>
<dbReference type="GO" id="GO:0005886">
    <property type="term" value="C:plasma membrane"/>
    <property type="evidence" value="ECO:0007669"/>
    <property type="project" value="UniProtKB-SubCell"/>
</dbReference>
<dbReference type="Gene3D" id="1.20.1440.20">
    <property type="entry name" value="LemA-like domain"/>
    <property type="match status" value="1"/>
</dbReference>
<dbReference type="InterPro" id="IPR023353">
    <property type="entry name" value="LemA-like_dom_sf"/>
</dbReference>
<dbReference type="InterPro" id="IPR007156">
    <property type="entry name" value="MamQ_LemA"/>
</dbReference>
<dbReference type="PANTHER" id="PTHR34478">
    <property type="entry name" value="PROTEIN LEMA"/>
    <property type="match status" value="1"/>
</dbReference>
<dbReference type="PANTHER" id="PTHR34478:SF1">
    <property type="entry name" value="PROTEIN LEMA"/>
    <property type="match status" value="1"/>
</dbReference>
<dbReference type="Pfam" id="PF04011">
    <property type="entry name" value="LemA"/>
    <property type="match status" value="1"/>
</dbReference>
<dbReference type="SUPFAM" id="SSF140478">
    <property type="entry name" value="LemA-like"/>
    <property type="match status" value="1"/>
</dbReference>
<organism>
    <name type="scientific">Metamycoplasma hominis (strain ATCC 23114 / DSM 25592 / NBRC 14850 / NCTC 10111 / PG21)</name>
    <name type="common">Mycoplasma hominis</name>
    <dbReference type="NCBI Taxonomy" id="347256"/>
    <lineage>
        <taxon>Bacteria</taxon>
        <taxon>Bacillati</taxon>
        <taxon>Mycoplasmatota</taxon>
        <taxon>Mycoplasmoidales</taxon>
        <taxon>Metamycoplasmataceae</taxon>
        <taxon>Metamycoplasma</taxon>
    </lineage>
</organism>